<accession>A5IT66</accession>
<keyword id="KW-0028">Amino-acid biosynthesis</keyword>
<keyword id="KW-0057">Aromatic amino acid biosynthesis</keyword>
<keyword id="KW-0067">ATP-binding</keyword>
<keyword id="KW-0963">Cytoplasm</keyword>
<keyword id="KW-0418">Kinase</keyword>
<keyword id="KW-0460">Magnesium</keyword>
<keyword id="KW-0479">Metal-binding</keyword>
<keyword id="KW-0547">Nucleotide-binding</keyword>
<keyword id="KW-0808">Transferase</keyword>
<name>AROK_STAA9</name>
<evidence type="ECO:0000255" key="1">
    <source>
        <dbReference type="HAMAP-Rule" id="MF_00109"/>
    </source>
</evidence>
<organism>
    <name type="scientific">Staphylococcus aureus (strain JH9)</name>
    <dbReference type="NCBI Taxonomy" id="359786"/>
    <lineage>
        <taxon>Bacteria</taxon>
        <taxon>Bacillati</taxon>
        <taxon>Bacillota</taxon>
        <taxon>Bacilli</taxon>
        <taxon>Bacillales</taxon>
        <taxon>Staphylococcaceae</taxon>
        <taxon>Staphylococcus</taxon>
    </lineage>
</organism>
<reference key="1">
    <citation type="submission" date="2007-05" db="EMBL/GenBank/DDBJ databases">
        <title>Complete sequence of chromosome of Staphylococcus aureus subsp. aureus JH9.</title>
        <authorList>
            <consortium name="US DOE Joint Genome Institute"/>
            <person name="Copeland A."/>
            <person name="Lucas S."/>
            <person name="Lapidus A."/>
            <person name="Barry K."/>
            <person name="Detter J.C."/>
            <person name="Glavina del Rio T."/>
            <person name="Hammon N."/>
            <person name="Israni S."/>
            <person name="Pitluck S."/>
            <person name="Chain P."/>
            <person name="Malfatti S."/>
            <person name="Shin M."/>
            <person name="Vergez L."/>
            <person name="Schmutz J."/>
            <person name="Larimer F."/>
            <person name="Land M."/>
            <person name="Hauser L."/>
            <person name="Kyrpides N."/>
            <person name="Kim E."/>
            <person name="Tomasz A."/>
            <person name="Richardson P."/>
        </authorList>
    </citation>
    <scope>NUCLEOTIDE SEQUENCE [LARGE SCALE GENOMIC DNA]</scope>
    <source>
        <strain>JH9</strain>
    </source>
</reference>
<proteinExistence type="inferred from homology"/>
<comment type="function">
    <text evidence="1">Catalyzes the specific phosphorylation of the 3-hydroxyl group of shikimic acid using ATP as a cosubstrate.</text>
</comment>
<comment type="catalytic activity">
    <reaction evidence="1">
        <text>shikimate + ATP = 3-phosphoshikimate + ADP + H(+)</text>
        <dbReference type="Rhea" id="RHEA:13121"/>
        <dbReference type="ChEBI" id="CHEBI:15378"/>
        <dbReference type="ChEBI" id="CHEBI:30616"/>
        <dbReference type="ChEBI" id="CHEBI:36208"/>
        <dbReference type="ChEBI" id="CHEBI:145989"/>
        <dbReference type="ChEBI" id="CHEBI:456216"/>
        <dbReference type="EC" id="2.7.1.71"/>
    </reaction>
</comment>
<comment type="cofactor">
    <cofactor evidence="1">
        <name>Mg(2+)</name>
        <dbReference type="ChEBI" id="CHEBI:18420"/>
    </cofactor>
    <text evidence="1">Binds 1 Mg(2+) ion per subunit.</text>
</comment>
<comment type="pathway">
    <text evidence="1">Metabolic intermediate biosynthesis; chorismate biosynthesis; chorismate from D-erythrose 4-phosphate and phosphoenolpyruvate: step 5/7.</text>
</comment>
<comment type="subunit">
    <text evidence="1">Monomer.</text>
</comment>
<comment type="subcellular location">
    <subcellularLocation>
        <location evidence="1">Cytoplasm</location>
    </subcellularLocation>
</comment>
<comment type="similarity">
    <text evidence="1">Belongs to the shikimate kinase family.</text>
</comment>
<feature type="chain" id="PRO_1000075961" description="Shikimate kinase">
    <location>
        <begin position="1"/>
        <end position="174"/>
    </location>
</feature>
<feature type="binding site" evidence="1">
    <location>
        <begin position="15"/>
        <end position="20"/>
    </location>
    <ligand>
        <name>ATP</name>
        <dbReference type="ChEBI" id="CHEBI:30616"/>
    </ligand>
</feature>
<feature type="binding site" evidence="1">
    <location>
        <position position="19"/>
    </location>
    <ligand>
        <name>Mg(2+)</name>
        <dbReference type="ChEBI" id="CHEBI:18420"/>
    </ligand>
</feature>
<feature type="binding site" evidence="1">
    <location>
        <position position="37"/>
    </location>
    <ligand>
        <name>substrate</name>
    </ligand>
</feature>
<feature type="binding site" evidence="1">
    <location>
        <position position="61"/>
    </location>
    <ligand>
        <name>substrate</name>
    </ligand>
</feature>
<feature type="binding site" evidence="1">
    <location>
        <position position="82"/>
    </location>
    <ligand>
        <name>substrate</name>
    </ligand>
</feature>
<feature type="binding site" evidence="1">
    <location>
        <position position="120"/>
    </location>
    <ligand>
        <name>ATP</name>
        <dbReference type="ChEBI" id="CHEBI:30616"/>
    </ligand>
</feature>
<feature type="binding site" evidence="1">
    <location>
        <position position="138"/>
    </location>
    <ligand>
        <name>substrate</name>
    </ligand>
</feature>
<protein>
    <recommendedName>
        <fullName evidence="1">Shikimate kinase</fullName>
        <shortName evidence="1">SK</shortName>
        <ecNumber evidence="1">2.7.1.71</ecNumber>
    </recommendedName>
</protein>
<dbReference type="EC" id="2.7.1.71" evidence="1"/>
<dbReference type="EMBL" id="CP000703">
    <property type="protein sequence ID" value="ABQ49389.1"/>
    <property type="molecule type" value="Genomic_DNA"/>
</dbReference>
<dbReference type="RefSeq" id="WP_001015120.1">
    <property type="nucleotide sequence ID" value="NC_009487.1"/>
</dbReference>
<dbReference type="SMR" id="A5IT66"/>
<dbReference type="KEGG" id="saj:SaurJH9_1596"/>
<dbReference type="HOGENOM" id="CLU_057607_4_3_9"/>
<dbReference type="UniPathway" id="UPA00053">
    <property type="reaction ID" value="UER00088"/>
</dbReference>
<dbReference type="GO" id="GO:0005829">
    <property type="term" value="C:cytosol"/>
    <property type="evidence" value="ECO:0007669"/>
    <property type="project" value="TreeGrafter"/>
</dbReference>
<dbReference type="GO" id="GO:0005524">
    <property type="term" value="F:ATP binding"/>
    <property type="evidence" value="ECO:0007669"/>
    <property type="project" value="UniProtKB-UniRule"/>
</dbReference>
<dbReference type="GO" id="GO:0000287">
    <property type="term" value="F:magnesium ion binding"/>
    <property type="evidence" value="ECO:0007669"/>
    <property type="project" value="UniProtKB-UniRule"/>
</dbReference>
<dbReference type="GO" id="GO:0004765">
    <property type="term" value="F:shikimate kinase activity"/>
    <property type="evidence" value="ECO:0007669"/>
    <property type="project" value="UniProtKB-UniRule"/>
</dbReference>
<dbReference type="GO" id="GO:0008652">
    <property type="term" value="P:amino acid biosynthetic process"/>
    <property type="evidence" value="ECO:0007669"/>
    <property type="project" value="UniProtKB-KW"/>
</dbReference>
<dbReference type="GO" id="GO:0009073">
    <property type="term" value="P:aromatic amino acid family biosynthetic process"/>
    <property type="evidence" value="ECO:0007669"/>
    <property type="project" value="UniProtKB-KW"/>
</dbReference>
<dbReference type="GO" id="GO:0009423">
    <property type="term" value="P:chorismate biosynthetic process"/>
    <property type="evidence" value="ECO:0007669"/>
    <property type="project" value="UniProtKB-UniRule"/>
</dbReference>
<dbReference type="CDD" id="cd00464">
    <property type="entry name" value="SK"/>
    <property type="match status" value="1"/>
</dbReference>
<dbReference type="FunFam" id="3.40.50.300:FF:001734">
    <property type="entry name" value="Shikimate kinase"/>
    <property type="match status" value="1"/>
</dbReference>
<dbReference type="Gene3D" id="3.40.50.300">
    <property type="entry name" value="P-loop containing nucleotide triphosphate hydrolases"/>
    <property type="match status" value="1"/>
</dbReference>
<dbReference type="HAMAP" id="MF_00109">
    <property type="entry name" value="Shikimate_kinase"/>
    <property type="match status" value="1"/>
</dbReference>
<dbReference type="InterPro" id="IPR027417">
    <property type="entry name" value="P-loop_NTPase"/>
</dbReference>
<dbReference type="InterPro" id="IPR031322">
    <property type="entry name" value="Shikimate/glucono_kinase"/>
</dbReference>
<dbReference type="InterPro" id="IPR000623">
    <property type="entry name" value="Shikimate_kinase/TSH1"/>
</dbReference>
<dbReference type="InterPro" id="IPR023000">
    <property type="entry name" value="Shikimate_kinase_CS"/>
</dbReference>
<dbReference type="PANTHER" id="PTHR21087">
    <property type="entry name" value="SHIKIMATE KINASE"/>
    <property type="match status" value="1"/>
</dbReference>
<dbReference type="PANTHER" id="PTHR21087:SF16">
    <property type="entry name" value="SHIKIMATE KINASE 1, CHLOROPLASTIC"/>
    <property type="match status" value="1"/>
</dbReference>
<dbReference type="Pfam" id="PF01202">
    <property type="entry name" value="SKI"/>
    <property type="match status" value="1"/>
</dbReference>
<dbReference type="PRINTS" id="PR01100">
    <property type="entry name" value="SHIKIMTKNASE"/>
</dbReference>
<dbReference type="SUPFAM" id="SSF52540">
    <property type="entry name" value="P-loop containing nucleoside triphosphate hydrolases"/>
    <property type="match status" value="1"/>
</dbReference>
<dbReference type="PROSITE" id="PS01128">
    <property type="entry name" value="SHIKIMATE_KINASE"/>
    <property type="match status" value="1"/>
</dbReference>
<sequence>MNHDKSPIILIGFMGTGKSTIGKYVADEQNLSFIDIDSYIEEKYKLTIPEIFSKHGEQYFRNLEFTCLQECINTADIIATGGGIIESEEAFNFLKNQKNIIWLDCNIDIIYSRINDDPHRPNANNKTIKQLNDLYCSRILRYNEIAFKKFDSHLLSISEIYYELLNLIKASDQY</sequence>
<gene>
    <name evidence="1" type="primary">aroK</name>
    <name type="ordered locus">SaurJH9_1596</name>
</gene>